<keyword id="KW-0175">Coiled coil</keyword>
<keyword id="KW-1185">Reference proteome</keyword>
<keyword id="KW-0770">Synapse</keyword>
<protein>
    <recommendedName>
        <fullName evidence="4">Inhibitory synaptic factor 1</fullName>
        <shortName evidence="4">InSyn1</shortName>
    </recommendedName>
</protein>
<dbReference type="EMBL" id="AK031382">
    <property type="protein sequence ID" value="BAC27375.1"/>
    <property type="molecule type" value="mRNA"/>
</dbReference>
<dbReference type="EMBL" id="BC096614">
    <property type="protein sequence ID" value="AAH96614.1"/>
    <property type="molecule type" value="mRNA"/>
</dbReference>
<dbReference type="CCDS" id="CCDS23243.1"/>
<dbReference type="RefSeq" id="NP_795895.1">
    <property type="nucleotide sequence ID" value="NM_176921.4"/>
</dbReference>
<dbReference type="SMR" id="Q8CD60"/>
<dbReference type="BioGRID" id="235300">
    <property type="interactions" value="1"/>
</dbReference>
<dbReference type="FunCoup" id="Q8CD60">
    <property type="interactions" value="29"/>
</dbReference>
<dbReference type="STRING" id="10090.ENSMUSP00000082800"/>
<dbReference type="PhosphoSitePlus" id="Q8CD60"/>
<dbReference type="jPOST" id="Q8CD60"/>
<dbReference type="PaxDb" id="10090-ENSMUSP00000082800"/>
<dbReference type="Antibodypedia" id="52382">
    <property type="antibodies" value="14 antibodies from 8 providers"/>
</dbReference>
<dbReference type="DNASU" id="319477"/>
<dbReference type="Ensembl" id="ENSMUST00000085658.5">
    <property type="protein sequence ID" value="ENSMUSP00000082800.5"/>
    <property type="gene ID" value="ENSMUSG00000066607.6"/>
</dbReference>
<dbReference type="Ensembl" id="ENSMUST00000216294.2">
    <property type="protein sequence ID" value="ENSMUSP00000148914.2"/>
    <property type="gene ID" value="ENSMUSG00000066607.6"/>
</dbReference>
<dbReference type="GeneID" id="319477"/>
<dbReference type="KEGG" id="mmu:319477"/>
<dbReference type="UCSC" id="uc009pwz.1">
    <property type="organism name" value="mouse"/>
</dbReference>
<dbReference type="AGR" id="MGI:2442108"/>
<dbReference type="CTD" id="388135"/>
<dbReference type="MGI" id="MGI:2442108">
    <property type="gene designation" value="Insyn1"/>
</dbReference>
<dbReference type="VEuPathDB" id="HostDB:ENSMUSG00000066607"/>
<dbReference type="eggNOG" id="ENOG502R2SS">
    <property type="taxonomic scope" value="Eukaryota"/>
</dbReference>
<dbReference type="GeneTree" id="ENSGT00910000144204"/>
<dbReference type="HOGENOM" id="CLU_073752_1_0_1"/>
<dbReference type="InParanoid" id="Q8CD60"/>
<dbReference type="OMA" id="HSLLYNC"/>
<dbReference type="OrthoDB" id="9946710at2759"/>
<dbReference type="PhylomeDB" id="Q8CD60"/>
<dbReference type="TreeFam" id="TF332382"/>
<dbReference type="BioGRID-ORCS" id="319477">
    <property type="hits" value="1 hit in 76 CRISPR screens"/>
</dbReference>
<dbReference type="PRO" id="PR:Q8CD60"/>
<dbReference type="Proteomes" id="UP000000589">
    <property type="component" value="Chromosome 9"/>
</dbReference>
<dbReference type="RNAct" id="Q8CD60">
    <property type="molecule type" value="protein"/>
</dbReference>
<dbReference type="Bgee" id="ENSMUSG00000066607">
    <property type="expression patterns" value="Expressed in striatum and 53 other cell types or tissues"/>
</dbReference>
<dbReference type="GO" id="GO:0098982">
    <property type="term" value="C:GABA-ergic synapse"/>
    <property type="evidence" value="ECO:0000314"/>
    <property type="project" value="SynGO"/>
</dbReference>
<dbReference type="GO" id="GO:0014069">
    <property type="term" value="C:postsynaptic density"/>
    <property type="evidence" value="ECO:0000314"/>
    <property type="project" value="UniProtKB"/>
</dbReference>
<dbReference type="GO" id="GO:0099572">
    <property type="term" value="C:postsynaptic specialization"/>
    <property type="evidence" value="ECO:0000314"/>
    <property type="project" value="SynGO"/>
</dbReference>
<dbReference type="GO" id="GO:0099565">
    <property type="term" value="P:chemical synaptic transmission, postsynaptic"/>
    <property type="evidence" value="ECO:0000314"/>
    <property type="project" value="SynGO"/>
</dbReference>
<dbReference type="GO" id="GO:0060080">
    <property type="term" value="P:inhibitory postsynaptic potential"/>
    <property type="evidence" value="ECO:0000314"/>
    <property type="project" value="UniProtKB"/>
</dbReference>
<dbReference type="GO" id="GO:0099084">
    <property type="term" value="P:postsynaptic specialization organization"/>
    <property type="evidence" value="ECO:0000314"/>
    <property type="project" value="SynGO"/>
</dbReference>
<dbReference type="InterPro" id="IPR027997">
    <property type="entry name" value="Largen/INSYN1"/>
</dbReference>
<dbReference type="PANTHER" id="PTHR15917">
    <property type="match status" value="1"/>
</dbReference>
<dbReference type="PANTHER" id="PTHR15917:SF3">
    <property type="entry name" value="INHIBITORY SYNAPTIC FACTOR 1"/>
    <property type="match status" value="1"/>
</dbReference>
<dbReference type="Pfam" id="PF15252">
    <property type="entry name" value="DUF4589"/>
    <property type="match status" value="1"/>
</dbReference>
<reference key="1">
    <citation type="journal article" date="2005" name="Science">
        <title>The transcriptional landscape of the mammalian genome.</title>
        <authorList>
            <person name="Carninci P."/>
            <person name="Kasukawa T."/>
            <person name="Katayama S."/>
            <person name="Gough J."/>
            <person name="Frith M.C."/>
            <person name="Maeda N."/>
            <person name="Oyama R."/>
            <person name="Ravasi T."/>
            <person name="Lenhard B."/>
            <person name="Wells C."/>
            <person name="Kodzius R."/>
            <person name="Shimokawa K."/>
            <person name="Bajic V.B."/>
            <person name="Brenner S.E."/>
            <person name="Batalov S."/>
            <person name="Forrest A.R."/>
            <person name="Zavolan M."/>
            <person name="Davis M.J."/>
            <person name="Wilming L.G."/>
            <person name="Aidinis V."/>
            <person name="Allen J.E."/>
            <person name="Ambesi-Impiombato A."/>
            <person name="Apweiler R."/>
            <person name="Aturaliya R.N."/>
            <person name="Bailey T.L."/>
            <person name="Bansal M."/>
            <person name="Baxter L."/>
            <person name="Beisel K.W."/>
            <person name="Bersano T."/>
            <person name="Bono H."/>
            <person name="Chalk A.M."/>
            <person name="Chiu K.P."/>
            <person name="Choudhary V."/>
            <person name="Christoffels A."/>
            <person name="Clutterbuck D.R."/>
            <person name="Crowe M.L."/>
            <person name="Dalla E."/>
            <person name="Dalrymple B.P."/>
            <person name="de Bono B."/>
            <person name="Della Gatta G."/>
            <person name="di Bernardo D."/>
            <person name="Down T."/>
            <person name="Engstrom P."/>
            <person name="Fagiolini M."/>
            <person name="Faulkner G."/>
            <person name="Fletcher C.F."/>
            <person name="Fukushima T."/>
            <person name="Furuno M."/>
            <person name="Futaki S."/>
            <person name="Gariboldi M."/>
            <person name="Georgii-Hemming P."/>
            <person name="Gingeras T.R."/>
            <person name="Gojobori T."/>
            <person name="Green R.E."/>
            <person name="Gustincich S."/>
            <person name="Harbers M."/>
            <person name="Hayashi Y."/>
            <person name="Hensch T.K."/>
            <person name="Hirokawa N."/>
            <person name="Hill D."/>
            <person name="Huminiecki L."/>
            <person name="Iacono M."/>
            <person name="Ikeo K."/>
            <person name="Iwama A."/>
            <person name="Ishikawa T."/>
            <person name="Jakt M."/>
            <person name="Kanapin A."/>
            <person name="Katoh M."/>
            <person name="Kawasawa Y."/>
            <person name="Kelso J."/>
            <person name="Kitamura H."/>
            <person name="Kitano H."/>
            <person name="Kollias G."/>
            <person name="Krishnan S.P."/>
            <person name="Kruger A."/>
            <person name="Kummerfeld S.K."/>
            <person name="Kurochkin I.V."/>
            <person name="Lareau L.F."/>
            <person name="Lazarevic D."/>
            <person name="Lipovich L."/>
            <person name="Liu J."/>
            <person name="Liuni S."/>
            <person name="McWilliam S."/>
            <person name="Madan Babu M."/>
            <person name="Madera M."/>
            <person name="Marchionni L."/>
            <person name="Matsuda H."/>
            <person name="Matsuzawa S."/>
            <person name="Miki H."/>
            <person name="Mignone F."/>
            <person name="Miyake S."/>
            <person name="Morris K."/>
            <person name="Mottagui-Tabar S."/>
            <person name="Mulder N."/>
            <person name="Nakano N."/>
            <person name="Nakauchi H."/>
            <person name="Ng P."/>
            <person name="Nilsson R."/>
            <person name="Nishiguchi S."/>
            <person name="Nishikawa S."/>
            <person name="Nori F."/>
            <person name="Ohara O."/>
            <person name="Okazaki Y."/>
            <person name="Orlando V."/>
            <person name="Pang K.C."/>
            <person name="Pavan W.J."/>
            <person name="Pavesi G."/>
            <person name="Pesole G."/>
            <person name="Petrovsky N."/>
            <person name="Piazza S."/>
            <person name="Reed J."/>
            <person name="Reid J.F."/>
            <person name="Ring B.Z."/>
            <person name="Ringwald M."/>
            <person name="Rost B."/>
            <person name="Ruan Y."/>
            <person name="Salzberg S.L."/>
            <person name="Sandelin A."/>
            <person name="Schneider C."/>
            <person name="Schoenbach C."/>
            <person name="Sekiguchi K."/>
            <person name="Semple C.A."/>
            <person name="Seno S."/>
            <person name="Sessa L."/>
            <person name="Sheng Y."/>
            <person name="Shibata Y."/>
            <person name="Shimada H."/>
            <person name="Shimada K."/>
            <person name="Silva D."/>
            <person name="Sinclair B."/>
            <person name="Sperling S."/>
            <person name="Stupka E."/>
            <person name="Sugiura K."/>
            <person name="Sultana R."/>
            <person name="Takenaka Y."/>
            <person name="Taki K."/>
            <person name="Tammoja K."/>
            <person name="Tan S.L."/>
            <person name="Tang S."/>
            <person name="Taylor M.S."/>
            <person name="Tegner J."/>
            <person name="Teichmann S.A."/>
            <person name="Ueda H.R."/>
            <person name="van Nimwegen E."/>
            <person name="Verardo R."/>
            <person name="Wei C.L."/>
            <person name="Yagi K."/>
            <person name="Yamanishi H."/>
            <person name="Zabarovsky E."/>
            <person name="Zhu S."/>
            <person name="Zimmer A."/>
            <person name="Hide W."/>
            <person name="Bult C."/>
            <person name="Grimmond S.M."/>
            <person name="Teasdale R.D."/>
            <person name="Liu E.T."/>
            <person name="Brusic V."/>
            <person name="Quackenbush J."/>
            <person name="Wahlestedt C."/>
            <person name="Mattick J.S."/>
            <person name="Hume D.A."/>
            <person name="Kai C."/>
            <person name="Sasaki D."/>
            <person name="Tomaru Y."/>
            <person name="Fukuda S."/>
            <person name="Kanamori-Katayama M."/>
            <person name="Suzuki M."/>
            <person name="Aoki J."/>
            <person name="Arakawa T."/>
            <person name="Iida J."/>
            <person name="Imamura K."/>
            <person name="Itoh M."/>
            <person name="Kato T."/>
            <person name="Kawaji H."/>
            <person name="Kawagashira N."/>
            <person name="Kawashima T."/>
            <person name="Kojima M."/>
            <person name="Kondo S."/>
            <person name="Konno H."/>
            <person name="Nakano K."/>
            <person name="Ninomiya N."/>
            <person name="Nishio T."/>
            <person name="Okada M."/>
            <person name="Plessy C."/>
            <person name="Shibata K."/>
            <person name="Shiraki T."/>
            <person name="Suzuki S."/>
            <person name="Tagami M."/>
            <person name="Waki K."/>
            <person name="Watahiki A."/>
            <person name="Okamura-Oho Y."/>
            <person name="Suzuki H."/>
            <person name="Kawai J."/>
            <person name="Hayashizaki Y."/>
        </authorList>
    </citation>
    <scope>NUCLEOTIDE SEQUENCE [LARGE SCALE MRNA]</scope>
    <source>
        <strain>C57BL/6J</strain>
        <tissue>Testis</tissue>
    </source>
</reference>
<reference key="2">
    <citation type="journal article" date="2004" name="Genome Res.">
        <title>The status, quality, and expansion of the NIH full-length cDNA project: the Mammalian Gene Collection (MGC).</title>
        <authorList>
            <consortium name="The MGC Project Team"/>
        </authorList>
    </citation>
    <scope>NUCLEOTIDE SEQUENCE [LARGE SCALE MRNA]</scope>
    <source>
        <tissue>Eye</tissue>
    </source>
</reference>
<reference key="3">
    <citation type="journal article" date="2016" name="Science">
        <title>Identification of an elaborate complex mediating postsynaptic inhibition.</title>
        <authorList>
            <person name="Uezu A."/>
            <person name="Kanak D.J."/>
            <person name="Bradshaw T.W."/>
            <person name="Soderblom E.J."/>
            <person name="Catavero C.M."/>
            <person name="Burette A.C."/>
            <person name="Weinberg R.J."/>
            <person name="Soderling S.H."/>
        </authorList>
    </citation>
    <scope>FUNCTION</scope>
    <scope>SUBCELLULAR LOCATION</scope>
    <scope>INTERACTION WITH GPHN</scope>
</reference>
<proteinExistence type="evidence at protein level"/>
<name>INSY1_MOUSE</name>
<sequence length="292" mass="31813">MNIRGAPDLGQPSDDPNSGGERERIRQRMKMVIGQLEGILRELKEVAKELREVVSQIDKLTSDFDFELEPDDWTTATVSSTSSSDKAGVGGPFDLGHLDFMTADILSDSWEFCSFLDVSTPSDSVDGPEAPRPGTGPDYQLMNGGLPIPNGPRVETPDSSSEEAFSAGPAKGQVPQRTPGTRERVRFSDKVLYHALCCDDEEGDGEEGEEEEEGDLAPELPRVEPHTGPLKPSPAPYKTKRSPLTTRRLGPTLAPEQTRRVTRNSSTQTVSDKSTQTVLPYTATKQKAKGKN</sequence>
<comment type="function">
    <text evidence="3">Component of the protein machinery at the inhibitory synapses, probably acting as a scaffold. Inhibitory synapses dampen neuronal activity through postsynaptic hyperpolarization. This synaptic inhibition is fundamental for the functioning of the central nervous system, shaping and orchestrating the flow of information through neuronal networks to generate a precise neural code.</text>
</comment>
<comment type="subunit">
    <text evidence="3">Interacts with GPHN.</text>
</comment>
<comment type="subcellular location">
    <subcellularLocation>
        <location evidence="3">Postsynaptic density</location>
    </subcellularLocation>
</comment>
<comment type="similarity">
    <text evidence="5">Belongs to the INSYN1 family.</text>
</comment>
<organism>
    <name type="scientific">Mus musculus</name>
    <name type="common">Mouse</name>
    <dbReference type="NCBI Taxonomy" id="10090"/>
    <lineage>
        <taxon>Eukaryota</taxon>
        <taxon>Metazoa</taxon>
        <taxon>Chordata</taxon>
        <taxon>Craniata</taxon>
        <taxon>Vertebrata</taxon>
        <taxon>Euteleostomi</taxon>
        <taxon>Mammalia</taxon>
        <taxon>Eutheria</taxon>
        <taxon>Euarchontoglires</taxon>
        <taxon>Glires</taxon>
        <taxon>Rodentia</taxon>
        <taxon>Myomorpha</taxon>
        <taxon>Muroidea</taxon>
        <taxon>Muridae</taxon>
        <taxon>Murinae</taxon>
        <taxon>Mus</taxon>
        <taxon>Mus</taxon>
    </lineage>
</organism>
<evidence type="ECO:0000255" key="1"/>
<evidence type="ECO:0000256" key="2">
    <source>
        <dbReference type="SAM" id="MobiDB-lite"/>
    </source>
</evidence>
<evidence type="ECO:0000269" key="3">
    <source>
    </source>
</evidence>
<evidence type="ECO:0000303" key="4">
    <source>
    </source>
</evidence>
<evidence type="ECO:0000305" key="5"/>
<accession>Q8CD60</accession>
<feature type="chain" id="PRO_0000337046" description="Inhibitory synaptic factor 1">
    <location>
        <begin position="1"/>
        <end position="292"/>
    </location>
</feature>
<feature type="region of interest" description="Disordered" evidence="2">
    <location>
        <begin position="1"/>
        <end position="25"/>
    </location>
</feature>
<feature type="region of interest" description="Disordered" evidence="2">
    <location>
        <begin position="120"/>
        <end position="292"/>
    </location>
</feature>
<feature type="coiled-coil region" evidence="1">
    <location>
        <begin position="30"/>
        <end position="63"/>
    </location>
</feature>
<feature type="compositionally biased region" description="Basic and acidic residues" evidence="2">
    <location>
        <begin position="180"/>
        <end position="192"/>
    </location>
</feature>
<feature type="compositionally biased region" description="Acidic residues" evidence="2">
    <location>
        <begin position="198"/>
        <end position="216"/>
    </location>
</feature>
<feature type="compositionally biased region" description="Polar residues" evidence="2">
    <location>
        <begin position="263"/>
        <end position="285"/>
    </location>
</feature>
<gene>
    <name type="primary">Insyn1</name>
</gene>